<organism>
    <name type="scientific">Methylobacterium nodulans (strain LMG 21967 / CNCM I-2342 / ORS 2060)</name>
    <dbReference type="NCBI Taxonomy" id="460265"/>
    <lineage>
        <taxon>Bacteria</taxon>
        <taxon>Pseudomonadati</taxon>
        <taxon>Pseudomonadota</taxon>
        <taxon>Alphaproteobacteria</taxon>
        <taxon>Hyphomicrobiales</taxon>
        <taxon>Methylobacteriaceae</taxon>
        <taxon>Methylobacterium</taxon>
    </lineage>
</organism>
<gene>
    <name evidence="1" type="primary">rpmJ</name>
    <name type="ordered locus">Mnod_5959</name>
</gene>
<sequence>MKIRNSLKSLRGRHRDNQIVRRKGRVYVINKTQKRYKARQG</sequence>
<protein>
    <recommendedName>
        <fullName evidence="1">Large ribosomal subunit protein bL36</fullName>
    </recommendedName>
    <alternativeName>
        <fullName evidence="2">50S ribosomal protein L36</fullName>
    </alternativeName>
</protein>
<evidence type="ECO:0000255" key="1">
    <source>
        <dbReference type="HAMAP-Rule" id="MF_00251"/>
    </source>
</evidence>
<evidence type="ECO:0000305" key="2"/>
<feature type="chain" id="PRO_1000196196" description="Large ribosomal subunit protein bL36">
    <location>
        <begin position="1"/>
        <end position="41"/>
    </location>
</feature>
<reference key="1">
    <citation type="submission" date="2009-01" db="EMBL/GenBank/DDBJ databases">
        <title>Complete sequence of chromosome of Methylobacterium nodulans ORS 2060.</title>
        <authorList>
            <consortium name="US DOE Joint Genome Institute"/>
            <person name="Lucas S."/>
            <person name="Copeland A."/>
            <person name="Lapidus A."/>
            <person name="Glavina del Rio T."/>
            <person name="Dalin E."/>
            <person name="Tice H."/>
            <person name="Bruce D."/>
            <person name="Goodwin L."/>
            <person name="Pitluck S."/>
            <person name="Sims D."/>
            <person name="Brettin T."/>
            <person name="Detter J.C."/>
            <person name="Han C."/>
            <person name="Larimer F."/>
            <person name="Land M."/>
            <person name="Hauser L."/>
            <person name="Kyrpides N."/>
            <person name="Ivanova N."/>
            <person name="Marx C.J."/>
            <person name="Richardson P."/>
        </authorList>
    </citation>
    <scope>NUCLEOTIDE SEQUENCE [LARGE SCALE GENOMIC DNA]</scope>
    <source>
        <strain>LMG 21967 / CNCM I-2342 / ORS 2060</strain>
    </source>
</reference>
<comment type="similarity">
    <text evidence="1">Belongs to the bacterial ribosomal protein bL36 family.</text>
</comment>
<proteinExistence type="inferred from homology"/>
<keyword id="KW-1185">Reference proteome</keyword>
<keyword id="KW-0687">Ribonucleoprotein</keyword>
<keyword id="KW-0689">Ribosomal protein</keyword>
<accession>B8ISY7</accession>
<dbReference type="EMBL" id="CP001349">
    <property type="protein sequence ID" value="ACL60786.1"/>
    <property type="molecule type" value="Genomic_DNA"/>
</dbReference>
<dbReference type="SMR" id="B8ISY7"/>
<dbReference type="STRING" id="460265.Mnod_5959"/>
<dbReference type="KEGG" id="mno:Mnod_5959"/>
<dbReference type="eggNOG" id="COG0257">
    <property type="taxonomic scope" value="Bacteria"/>
</dbReference>
<dbReference type="HOGENOM" id="CLU_135723_3_2_5"/>
<dbReference type="OrthoDB" id="9801558at2"/>
<dbReference type="Proteomes" id="UP000008207">
    <property type="component" value="Chromosome"/>
</dbReference>
<dbReference type="GO" id="GO:1990904">
    <property type="term" value="C:ribonucleoprotein complex"/>
    <property type="evidence" value="ECO:0007669"/>
    <property type="project" value="UniProtKB-KW"/>
</dbReference>
<dbReference type="GO" id="GO:0005840">
    <property type="term" value="C:ribosome"/>
    <property type="evidence" value="ECO:0007669"/>
    <property type="project" value="UniProtKB-KW"/>
</dbReference>
<dbReference type="GO" id="GO:0003735">
    <property type="term" value="F:structural constituent of ribosome"/>
    <property type="evidence" value="ECO:0007669"/>
    <property type="project" value="InterPro"/>
</dbReference>
<dbReference type="GO" id="GO:0006412">
    <property type="term" value="P:translation"/>
    <property type="evidence" value="ECO:0007669"/>
    <property type="project" value="UniProtKB-UniRule"/>
</dbReference>
<dbReference type="HAMAP" id="MF_00251">
    <property type="entry name" value="Ribosomal_bL36"/>
    <property type="match status" value="1"/>
</dbReference>
<dbReference type="InterPro" id="IPR000473">
    <property type="entry name" value="Ribosomal_bL36"/>
</dbReference>
<dbReference type="InterPro" id="IPR035977">
    <property type="entry name" value="Ribosomal_bL36_sp"/>
</dbReference>
<dbReference type="InterPro" id="IPR047621">
    <property type="entry name" value="Ribosomal_L36_bact"/>
</dbReference>
<dbReference type="NCBIfam" id="NF002021">
    <property type="entry name" value="PRK00831.1"/>
    <property type="match status" value="1"/>
</dbReference>
<dbReference type="NCBIfam" id="TIGR01022">
    <property type="entry name" value="rpmJ_bact"/>
    <property type="match status" value="1"/>
</dbReference>
<dbReference type="PANTHER" id="PTHR47781">
    <property type="entry name" value="50S RIBOSOMAL PROTEIN L36 2"/>
    <property type="match status" value="1"/>
</dbReference>
<dbReference type="PANTHER" id="PTHR47781:SF1">
    <property type="entry name" value="LARGE RIBOSOMAL SUBUNIT PROTEIN BL36B"/>
    <property type="match status" value="1"/>
</dbReference>
<dbReference type="Pfam" id="PF00444">
    <property type="entry name" value="Ribosomal_L36"/>
    <property type="match status" value="1"/>
</dbReference>
<dbReference type="SUPFAM" id="SSF57840">
    <property type="entry name" value="Ribosomal protein L36"/>
    <property type="match status" value="1"/>
</dbReference>
<name>RL36_METNO</name>